<gene>
    <name evidence="1" type="primary">gpsA</name>
    <name type="ordered locus">Sbal_4329</name>
</gene>
<proteinExistence type="inferred from homology"/>
<reference key="1">
    <citation type="submission" date="2007-02" db="EMBL/GenBank/DDBJ databases">
        <title>Complete sequence of chromosome of Shewanella baltica OS155.</title>
        <authorList>
            <consortium name="US DOE Joint Genome Institute"/>
            <person name="Copeland A."/>
            <person name="Lucas S."/>
            <person name="Lapidus A."/>
            <person name="Barry K."/>
            <person name="Detter J.C."/>
            <person name="Glavina del Rio T."/>
            <person name="Hammon N."/>
            <person name="Israni S."/>
            <person name="Dalin E."/>
            <person name="Tice H."/>
            <person name="Pitluck S."/>
            <person name="Sims D.R."/>
            <person name="Brettin T."/>
            <person name="Bruce D."/>
            <person name="Han C."/>
            <person name="Tapia R."/>
            <person name="Brainard J."/>
            <person name="Schmutz J."/>
            <person name="Larimer F."/>
            <person name="Land M."/>
            <person name="Hauser L."/>
            <person name="Kyrpides N."/>
            <person name="Mikhailova N."/>
            <person name="Brettar I."/>
            <person name="Klappenbach J."/>
            <person name="Konstantinidis K."/>
            <person name="Rodrigues J."/>
            <person name="Tiedje J."/>
            <person name="Richardson P."/>
        </authorList>
    </citation>
    <scope>NUCLEOTIDE SEQUENCE [LARGE SCALE GENOMIC DNA]</scope>
    <source>
        <strain>OS155 / ATCC BAA-1091</strain>
    </source>
</reference>
<protein>
    <recommendedName>
        <fullName evidence="1">Glycerol-3-phosphate dehydrogenase [NAD(P)+]</fullName>
        <ecNumber evidence="1">1.1.1.94</ecNumber>
    </recommendedName>
    <alternativeName>
        <fullName evidence="1">NAD(P)(+)-dependent glycerol-3-phosphate dehydrogenase</fullName>
    </alternativeName>
    <alternativeName>
        <fullName evidence="1">NAD(P)H-dependent dihydroxyacetone-phosphate reductase</fullName>
    </alternativeName>
</protein>
<organism>
    <name type="scientific">Shewanella baltica (strain OS155 / ATCC BAA-1091)</name>
    <dbReference type="NCBI Taxonomy" id="325240"/>
    <lineage>
        <taxon>Bacteria</taxon>
        <taxon>Pseudomonadati</taxon>
        <taxon>Pseudomonadota</taxon>
        <taxon>Gammaproteobacteria</taxon>
        <taxon>Alteromonadales</taxon>
        <taxon>Shewanellaceae</taxon>
        <taxon>Shewanella</taxon>
    </lineage>
</organism>
<feature type="chain" id="PRO_1000049547" description="Glycerol-3-phosphate dehydrogenase [NAD(P)+]">
    <location>
        <begin position="1"/>
        <end position="338"/>
    </location>
</feature>
<feature type="active site" description="Proton acceptor" evidence="1">
    <location>
        <position position="194"/>
    </location>
</feature>
<feature type="binding site" evidence="1">
    <location>
        <position position="14"/>
    </location>
    <ligand>
        <name>NADPH</name>
        <dbReference type="ChEBI" id="CHEBI:57783"/>
    </ligand>
</feature>
<feature type="binding site" evidence="1">
    <location>
        <position position="15"/>
    </location>
    <ligand>
        <name>NADPH</name>
        <dbReference type="ChEBI" id="CHEBI:57783"/>
    </ligand>
</feature>
<feature type="binding site" evidence="1">
    <location>
        <position position="35"/>
    </location>
    <ligand>
        <name>NADPH</name>
        <dbReference type="ChEBI" id="CHEBI:57783"/>
    </ligand>
</feature>
<feature type="binding site" evidence="1">
    <location>
        <position position="109"/>
    </location>
    <ligand>
        <name>NADPH</name>
        <dbReference type="ChEBI" id="CHEBI:57783"/>
    </ligand>
</feature>
<feature type="binding site" evidence="1">
    <location>
        <position position="109"/>
    </location>
    <ligand>
        <name>sn-glycerol 3-phosphate</name>
        <dbReference type="ChEBI" id="CHEBI:57597"/>
    </ligand>
</feature>
<feature type="binding site" evidence="1">
    <location>
        <position position="138"/>
    </location>
    <ligand>
        <name>sn-glycerol 3-phosphate</name>
        <dbReference type="ChEBI" id="CHEBI:57597"/>
    </ligand>
</feature>
<feature type="binding site" evidence="1">
    <location>
        <position position="140"/>
    </location>
    <ligand>
        <name>sn-glycerol 3-phosphate</name>
        <dbReference type="ChEBI" id="CHEBI:57597"/>
    </ligand>
</feature>
<feature type="binding site" evidence="1">
    <location>
        <position position="142"/>
    </location>
    <ligand>
        <name>NADPH</name>
        <dbReference type="ChEBI" id="CHEBI:57783"/>
    </ligand>
</feature>
<feature type="binding site" evidence="1">
    <location>
        <position position="194"/>
    </location>
    <ligand>
        <name>sn-glycerol 3-phosphate</name>
        <dbReference type="ChEBI" id="CHEBI:57597"/>
    </ligand>
</feature>
<feature type="binding site" evidence="1">
    <location>
        <position position="247"/>
    </location>
    <ligand>
        <name>sn-glycerol 3-phosphate</name>
        <dbReference type="ChEBI" id="CHEBI:57597"/>
    </ligand>
</feature>
<feature type="binding site" evidence="1">
    <location>
        <position position="257"/>
    </location>
    <ligand>
        <name>sn-glycerol 3-phosphate</name>
        <dbReference type="ChEBI" id="CHEBI:57597"/>
    </ligand>
</feature>
<feature type="binding site" evidence="1">
    <location>
        <position position="258"/>
    </location>
    <ligand>
        <name>NADPH</name>
        <dbReference type="ChEBI" id="CHEBI:57783"/>
    </ligand>
</feature>
<feature type="binding site" evidence="1">
    <location>
        <position position="258"/>
    </location>
    <ligand>
        <name>sn-glycerol 3-phosphate</name>
        <dbReference type="ChEBI" id="CHEBI:57597"/>
    </ligand>
</feature>
<feature type="binding site" evidence="1">
    <location>
        <position position="259"/>
    </location>
    <ligand>
        <name>sn-glycerol 3-phosphate</name>
        <dbReference type="ChEBI" id="CHEBI:57597"/>
    </ligand>
</feature>
<feature type="binding site" evidence="1">
    <location>
        <position position="282"/>
    </location>
    <ligand>
        <name>NADPH</name>
        <dbReference type="ChEBI" id="CHEBI:57783"/>
    </ligand>
</feature>
<feature type="binding site" evidence="1">
    <location>
        <position position="284"/>
    </location>
    <ligand>
        <name>NADPH</name>
        <dbReference type="ChEBI" id="CHEBI:57783"/>
    </ligand>
</feature>
<dbReference type="EC" id="1.1.1.94" evidence="1"/>
<dbReference type="EMBL" id="CP000563">
    <property type="protein sequence ID" value="ABN63790.1"/>
    <property type="molecule type" value="Genomic_DNA"/>
</dbReference>
<dbReference type="RefSeq" id="WP_011848268.1">
    <property type="nucleotide sequence ID" value="NC_009052.1"/>
</dbReference>
<dbReference type="SMR" id="A3DAM7"/>
<dbReference type="STRING" id="325240.Sbal_4329"/>
<dbReference type="KEGG" id="sbl:Sbal_4329"/>
<dbReference type="HOGENOM" id="CLU_033449_0_2_6"/>
<dbReference type="OrthoDB" id="9812273at2"/>
<dbReference type="UniPathway" id="UPA00940"/>
<dbReference type="Proteomes" id="UP000001557">
    <property type="component" value="Chromosome"/>
</dbReference>
<dbReference type="GO" id="GO:0005829">
    <property type="term" value="C:cytosol"/>
    <property type="evidence" value="ECO:0007669"/>
    <property type="project" value="TreeGrafter"/>
</dbReference>
<dbReference type="GO" id="GO:0047952">
    <property type="term" value="F:glycerol-3-phosphate dehydrogenase [NAD(P)+] activity"/>
    <property type="evidence" value="ECO:0007669"/>
    <property type="project" value="UniProtKB-UniRule"/>
</dbReference>
<dbReference type="GO" id="GO:0051287">
    <property type="term" value="F:NAD binding"/>
    <property type="evidence" value="ECO:0007669"/>
    <property type="project" value="InterPro"/>
</dbReference>
<dbReference type="GO" id="GO:0005975">
    <property type="term" value="P:carbohydrate metabolic process"/>
    <property type="evidence" value="ECO:0007669"/>
    <property type="project" value="InterPro"/>
</dbReference>
<dbReference type="GO" id="GO:0046167">
    <property type="term" value="P:glycerol-3-phosphate biosynthetic process"/>
    <property type="evidence" value="ECO:0007669"/>
    <property type="project" value="UniProtKB-UniRule"/>
</dbReference>
<dbReference type="GO" id="GO:0046168">
    <property type="term" value="P:glycerol-3-phosphate catabolic process"/>
    <property type="evidence" value="ECO:0007669"/>
    <property type="project" value="InterPro"/>
</dbReference>
<dbReference type="GO" id="GO:0046474">
    <property type="term" value="P:glycerophospholipid biosynthetic process"/>
    <property type="evidence" value="ECO:0007669"/>
    <property type="project" value="TreeGrafter"/>
</dbReference>
<dbReference type="FunFam" id="1.10.1040.10:FF:000001">
    <property type="entry name" value="Glycerol-3-phosphate dehydrogenase [NAD(P)+]"/>
    <property type="match status" value="1"/>
</dbReference>
<dbReference type="FunFam" id="3.40.50.720:FF:000019">
    <property type="entry name" value="Glycerol-3-phosphate dehydrogenase [NAD(P)+]"/>
    <property type="match status" value="1"/>
</dbReference>
<dbReference type="Gene3D" id="1.10.1040.10">
    <property type="entry name" value="N-(1-d-carboxylethyl)-l-norvaline Dehydrogenase, domain 2"/>
    <property type="match status" value="1"/>
</dbReference>
<dbReference type="Gene3D" id="3.40.50.720">
    <property type="entry name" value="NAD(P)-binding Rossmann-like Domain"/>
    <property type="match status" value="1"/>
</dbReference>
<dbReference type="HAMAP" id="MF_00394">
    <property type="entry name" value="NAD_Glyc3P_dehydrog"/>
    <property type="match status" value="1"/>
</dbReference>
<dbReference type="InterPro" id="IPR008927">
    <property type="entry name" value="6-PGluconate_DH-like_C_sf"/>
</dbReference>
<dbReference type="InterPro" id="IPR013328">
    <property type="entry name" value="6PGD_dom2"/>
</dbReference>
<dbReference type="InterPro" id="IPR006168">
    <property type="entry name" value="G3P_DH_NAD-dep"/>
</dbReference>
<dbReference type="InterPro" id="IPR006109">
    <property type="entry name" value="G3P_DH_NAD-dep_C"/>
</dbReference>
<dbReference type="InterPro" id="IPR011128">
    <property type="entry name" value="G3P_DH_NAD-dep_N"/>
</dbReference>
<dbReference type="InterPro" id="IPR036291">
    <property type="entry name" value="NAD(P)-bd_dom_sf"/>
</dbReference>
<dbReference type="NCBIfam" id="NF000939">
    <property type="entry name" value="PRK00094.1-1"/>
    <property type="match status" value="1"/>
</dbReference>
<dbReference type="NCBIfam" id="NF000940">
    <property type="entry name" value="PRK00094.1-2"/>
    <property type="match status" value="1"/>
</dbReference>
<dbReference type="NCBIfam" id="NF000942">
    <property type="entry name" value="PRK00094.1-4"/>
    <property type="match status" value="1"/>
</dbReference>
<dbReference type="PANTHER" id="PTHR11728">
    <property type="entry name" value="GLYCEROL-3-PHOSPHATE DEHYDROGENASE"/>
    <property type="match status" value="1"/>
</dbReference>
<dbReference type="PANTHER" id="PTHR11728:SF1">
    <property type="entry name" value="GLYCEROL-3-PHOSPHATE DEHYDROGENASE [NAD(+)] 2, CHLOROPLASTIC"/>
    <property type="match status" value="1"/>
</dbReference>
<dbReference type="Pfam" id="PF07479">
    <property type="entry name" value="NAD_Gly3P_dh_C"/>
    <property type="match status" value="1"/>
</dbReference>
<dbReference type="Pfam" id="PF01210">
    <property type="entry name" value="NAD_Gly3P_dh_N"/>
    <property type="match status" value="1"/>
</dbReference>
<dbReference type="PIRSF" id="PIRSF000114">
    <property type="entry name" value="Glycerol-3-P_dh"/>
    <property type="match status" value="1"/>
</dbReference>
<dbReference type="PRINTS" id="PR00077">
    <property type="entry name" value="GPDHDRGNASE"/>
</dbReference>
<dbReference type="SUPFAM" id="SSF48179">
    <property type="entry name" value="6-phosphogluconate dehydrogenase C-terminal domain-like"/>
    <property type="match status" value="1"/>
</dbReference>
<dbReference type="SUPFAM" id="SSF51735">
    <property type="entry name" value="NAD(P)-binding Rossmann-fold domains"/>
    <property type="match status" value="1"/>
</dbReference>
<dbReference type="PROSITE" id="PS00957">
    <property type="entry name" value="NAD_G3PDH"/>
    <property type="match status" value="1"/>
</dbReference>
<sequence>MKNSADITVLGAGSYGTALAISLASNGHKTLLWGHDPVHMQTLAQDKCNQAFLPGIAFPDCLQIEADLAKALAASNNVLVVVPSHVFGTVLEQAKPLLRSDARIVWATKGLEPETGRLLQDVARDVLGEQYPLAVLSGPTFAKELAMGLPTAISVAGTCPTFTNYLVELLHSPKRLRVYANDDFTGLQLGGAVKNVIAIGAGMSDGIGFGANARTALITRGLVELTRLGEALGANAATFMGMAGLGDLVLTCTDNQSRNRRFGLALGKGCDVMTAQAEIGQVVEGYRNTKEVFTLAKRLGVEMPITEQIYQVLYQGKSPVDAAKELLSREKKSETPAQ</sequence>
<keyword id="KW-0963">Cytoplasm</keyword>
<keyword id="KW-0444">Lipid biosynthesis</keyword>
<keyword id="KW-0443">Lipid metabolism</keyword>
<keyword id="KW-0520">NAD</keyword>
<keyword id="KW-0521">NADP</keyword>
<keyword id="KW-0547">Nucleotide-binding</keyword>
<keyword id="KW-0560">Oxidoreductase</keyword>
<keyword id="KW-0594">Phospholipid biosynthesis</keyword>
<keyword id="KW-1208">Phospholipid metabolism</keyword>
<keyword id="KW-1185">Reference proteome</keyword>
<accession>A3DAM7</accession>
<comment type="function">
    <text evidence="1">Catalyzes the reduction of the glycolytic intermediate dihydroxyacetone phosphate (DHAP) to sn-glycerol 3-phosphate (G3P), the key precursor for phospholipid synthesis.</text>
</comment>
<comment type="catalytic activity">
    <reaction evidence="1">
        <text>sn-glycerol 3-phosphate + NAD(+) = dihydroxyacetone phosphate + NADH + H(+)</text>
        <dbReference type="Rhea" id="RHEA:11092"/>
        <dbReference type="ChEBI" id="CHEBI:15378"/>
        <dbReference type="ChEBI" id="CHEBI:57540"/>
        <dbReference type="ChEBI" id="CHEBI:57597"/>
        <dbReference type="ChEBI" id="CHEBI:57642"/>
        <dbReference type="ChEBI" id="CHEBI:57945"/>
        <dbReference type="EC" id="1.1.1.94"/>
    </reaction>
    <physiologicalReaction direction="right-to-left" evidence="1">
        <dbReference type="Rhea" id="RHEA:11094"/>
    </physiologicalReaction>
</comment>
<comment type="catalytic activity">
    <reaction evidence="1">
        <text>sn-glycerol 3-phosphate + NADP(+) = dihydroxyacetone phosphate + NADPH + H(+)</text>
        <dbReference type="Rhea" id="RHEA:11096"/>
        <dbReference type="ChEBI" id="CHEBI:15378"/>
        <dbReference type="ChEBI" id="CHEBI:57597"/>
        <dbReference type="ChEBI" id="CHEBI:57642"/>
        <dbReference type="ChEBI" id="CHEBI:57783"/>
        <dbReference type="ChEBI" id="CHEBI:58349"/>
        <dbReference type="EC" id="1.1.1.94"/>
    </reaction>
    <physiologicalReaction direction="right-to-left" evidence="1">
        <dbReference type="Rhea" id="RHEA:11098"/>
    </physiologicalReaction>
</comment>
<comment type="pathway">
    <text evidence="1">Membrane lipid metabolism; glycerophospholipid metabolism.</text>
</comment>
<comment type="subcellular location">
    <subcellularLocation>
        <location evidence="1">Cytoplasm</location>
    </subcellularLocation>
</comment>
<comment type="similarity">
    <text evidence="1">Belongs to the NAD-dependent glycerol-3-phosphate dehydrogenase family.</text>
</comment>
<evidence type="ECO:0000255" key="1">
    <source>
        <dbReference type="HAMAP-Rule" id="MF_00394"/>
    </source>
</evidence>
<name>GPDA_SHEB5</name>